<proteinExistence type="inferred from homology"/>
<gene>
    <name evidence="1" type="primary">lpxD</name>
    <name type="ordered locus">Cag_1154</name>
</gene>
<comment type="function">
    <text evidence="1">Catalyzes the N-acylation of UDP-3-O-acylglucosamine using 3-hydroxyacyl-ACP as the acyl donor. Is involved in the biosynthesis of lipid A, a phosphorylated glycolipid that anchors the lipopolysaccharide to the outer membrane of the cell.</text>
</comment>
<comment type="catalytic activity">
    <reaction evidence="1">
        <text>a UDP-3-O-[(3R)-3-hydroxyacyl]-alpha-D-glucosamine + a (3R)-hydroxyacyl-[ACP] = a UDP-2-N,3-O-bis[(3R)-3-hydroxyacyl]-alpha-D-glucosamine + holo-[ACP] + H(+)</text>
        <dbReference type="Rhea" id="RHEA:53836"/>
        <dbReference type="Rhea" id="RHEA-COMP:9685"/>
        <dbReference type="Rhea" id="RHEA-COMP:9945"/>
        <dbReference type="ChEBI" id="CHEBI:15378"/>
        <dbReference type="ChEBI" id="CHEBI:64479"/>
        <dbReference type="ChEBI" id="CHEBI:78827"/>
        <dbReference type="ChEBI" id="CHEBI:137740"/>
        <dbReference type="ChEBI" id="CHEBI:137748"/>
        <dbReference type="EC" id="2.3.1.191"/>
    </reaction>
</comment>
<comment type="pathway">
    <text evidence="1">Bacterial outer membrane biogenesis; LPS lipid A biosynthesis.</text>
</comment>
<comment type="subunit">
    <text evidence="1">Homotrimer.</text>
</comment>
<comment type="similarity">
    <text evidence="1">Belongs to the transferase hexapeptide repeat family. LpxD subfamily.</text>
</comment>
<protein>
    <recommendedName>
        <fullName evidence="1">UDP-3-O-acylglucosamine N-acyltransferase</fullName>
        <ecNumber evidence="1">2.3.1.191</ecNumber>
    </recommendedName>
</protein>
<evidence type="ECO:0000255" key="1">
    <source>
        <dbReference type="HAMAP-Rule" id="MF_00523"/>
    </source>
</evidence>
<keyword id="KW-0012">Acyltransferase</keyword>
<keyword id="KW-0441">Lipid A biosynthesis</keyword>
<keyword id="KW-0444">Lipid biosynthesis</keyword>
<keyword id="KW-0443">Lipid metabolism</keyword>
<keyword id="KW-0677">Repeat</keyword>
<keyword id="KW-0808">Transferase</keyword>
<reference key="1">
    <citation type="submission" date="2005-08" db="EMBL/GenBank/DDBJ databases">
        <title>Complete sequence of Chlorobium chlorochromatii CaD3.</title>
        <authorList>
            <consortium name="US DOE Joint Genome Institute"/>
            <person name="Copeland A."/>
            <person name="Lucas S."/>
            <person name="Lapidus A."/>
            <person name="Barry K."/>
            <person name="Detter J.C."/>
            <person name="Glavina T."/>
            <person name="Hammon N."/>
            <person name="Israni S."/>
            <person name="Pitluck S."/>
            <person name="Bryant D."/>
            <person name="Schmutz J."/>
            <person name="Larimer F."/>
            <person name="Land M."/>
            <person name="Kyrpides N."/>
            <person name="Ivanova N."/>
            <person name="Richardson P."/>
        </authorList>
    </citation>
    <scope>NUCLEOTIDE SEQUENCE [LARGE SCALE GENOMIC DNA]</scope>
    <source>
        <strain>CaD3</strain>
    </source>
</reference>
<organism>
    <name type="scientific">Chlorobium chlorochromatii (strain CaD3)</name>
    <dbReference type="NCBI Taxonomy" id="340177"/>
    <lineage>
        <taxon>Bacteria</taxon>
        <taxon>Pseudomonadati</taxon>
        <taxon>Chlorobiota</taxon>
        <taxon>Chlorobiia</taxon>
        <taxon>Chlorobiales</taxon>
        <taxon>Chlorobiaceae</taxon>
        <taxon>Chlorobium/Pelodictyon group</taxon>
        <taxon>Chlorobium</taxon>
    </lineage>
</organism>
<sequence length="359" mass="38385">MMTIQEIYEYLSRFFTPVELIGNGEELIHAPAKIESAQAGEVTFVANKKYLRFLALTEASLVIVERSLAVEEYVGKHSFLKVNDPYSAFVFLLQRFIPPRRIAKQGIAATASIGSNVTIGENVSIGEYAVIGEHCSIGNNTVIAAHSVLLDHVTIGSDVVLFPHVTCYDGTRIGNRVVIHSGAVIGADGFGFAPQQDGSYIKIPQIGIVEIGDDVEIGANTTIDRATLGSTVIESGVKLDNLVQVAHNCRIGAHTVIAAQAGVSGSTTLGNHCIVGGQVGFAGHIEVSDHIQVAAKAGVSKSFMQSGIALRGYPAQPMREQLKYEAQLRTVGDLHAKLKALEQELKALRGSEMPLQNTL</sequence>
<dbReference type="EC" id="2.3.1.191" evidence="1"/>
<dbReference type="EMBL" id="CP000108">
    <property type="protein sequence ID" value="ABB28416.1"/>
    <property type="molecule type" value="Genomic_DNA"/>
</dbReference>
<dbReference type="SMR" id="Q3ARF9"/>
<dbReference type="STRING" id="340177.Cag_1154"/>
<dbReference type="KEGG" id="cch:Cag_1154"/>
<dbReference type="eggNOG" id="COG1044">
    <property type="taxonomic scope" value="Bacteria"/>
</dbReference>
<dbReference type="HOGENOM" id="CLU_049865_0_0_10"/>
<dbReference type="OrthoDB" id="9784739at2"/>
<dbReference type="UniPathway" id="UPA00973"/>
<dbReference type="GO" id="GO:0016020">
    <property type="term" value="C:membrane"/>
    <property type="evidence" value="ECO:0007669"/>
    <property type="project" value="GOC"/>
</dbReference>
<dbReference type="GO" id="GO:0016410">
    <property type="term" value="F:N-acyltransferase activity"/>
    <property type="evidence" value="ECO:0007669"/>
    <property type="project" value="InterPro"/>
</dbReference>
<dbReference type="GO" id="GO:0009245">
    <property type="term" value="P:lipid A biosynthetic process"/>
    <property type="evidence" value="ECO:0007669"/>
    <property type="project" value="UniProtKB-UniRule"/>
</dbReference>
<dbReference type="CDD" id="cd03352">
    <property type="entry name" value="LbH_LpxD"/>
    <property type="match status" value="1"/>
</dbReference>
<dbReference type="Gene3D" id="2.160.10.10">
    <property type="entry name" value="Hexapeptide repeat proteins"/>
    <property type="match status" value="1"/>
</dbReference>
<dbReference type="Gene3D" id="3.40.1390.10">
    <property type="entry name" value="MurE/MurF, N-terminal domain"/>
    <property type="match status" value="1"/>
</dbReference>
<dbReference type="HAMAP" id="MF_00523">
    <property type="entry name" value="LpxD"/>
    <property type="match status" value="1"/>
</dbReference>
<dbReference type="InterPro" id="IPR001451">
    <property type="entry name" value="Hexapep"/>
</dbReference>
<dbReference type="InterPro" id="IPR018357">
    <property type="entry name" value="Hexapep_transf_CS"/>
</dbReference>
<dbReference type="InterPro" id="IPR007691">
    <property type="entry name" value="LpxD"/>
</dbReference>
<dbReference type="InterPro" id="IPR011004">
    <property type="entry name" value="Trimer_LpxA-like_sf"/>
</dbReference>
<dbReference type="InterPro" id="IPR020573">
    <property type="entry name" value="UDP_GlcNAc_AcTrfase_non-rep"/>
</dbReference>
<dbReference type="NCBIfam" id="TIGR01853">
    <property type="entry name" value="lipid_A_lpxD"/>
    <property type="match status" value="1"/>
</dbReference>
<dbReference type="NCBIfam" id="NF002060">
    <property type="entry name" value="PRK00892.1"/>
    <property type="match status" value="1"/>
</dbReference>
<dbReference type="PANTHER" id="PTHR43378">
    <property type="entry name" value="UDP-3-O-ACYLGLUCOSAMINE N-ACYLTRANSFERASE"/>
    <property type="match status" value="1"/>
</dbReference>
<dbReference type="PANTHER" id="PTHR43378:SF2">
    <property type="entry name" value="UDP-3-O-ACYLGLUCOSAMINE N-ACYLTRANSFERASE 1, MITOCHONDRIAL-RELATED"/>
    <property type="match status" value="1"/>
</dbReference>
<dbReference type="Pfam" id="PF00132">
    <property type="entry name" value="Hexapep"/>
    <property type="match status" value="2"/>
</dbReference>
<dbReference type="Pfam" id="PF14602">
    <property type="entry name" value="Hexapep_2"/>
    <property type="match status" value="1"/>
</dbReference>
<dbReference type="Pfam" id="PF04613">
    <property type="entry name" value="LpxD"/>
    <property type="match status" value="1"/>
</dbReference>
<dbReference type="SUPFAM" id="SSF51161">
    <property type="entry name" value="Trimeric LpxA-like enzymes"/>
    <property type="match status" value="1"/>
</dbReference>
<dbReference type="PROSITE" id="PS00101">
    <property type="entry name" value="HEXAPEP_TRANSFERASES"/>
    <property type="match status" value="1"/>
</dbReference>
<accession>Q3ARF9</accession>
<feature type="chain" id="PRO_0000264359" description="UDP-3-O-acylglucosamine N-acyltransferase">
    <location>
        <begin position="1"/>
        <end position="359"/>
    </location>
</feature>
<feature type="active site" description="Proton acceptor" evidence="1">
    <location>
        <position position="247"/>
    </location>
</feature>
<name>LPXD_CHLCH</name>